<gene>
    <name evidence="1" type="primary">glmU</name>
    <name type="ordered locus">Reut_A0229</name>
</gene>
<sequence length="454" mass="48502">MNIVILAAGMGKRMHSDLPKVLHPVAGRPMLAHVIDTARTLSPSRLVVVIGHGAERVREAVAADDVTFAEQDQQLGTGHAVMQALPQLDDNQPTLVLYGDVPLTTAATLKALVEAAGNTRFGVLTVEMPDPTGYGRIVRDAAGSIVRIVEQKDASEAVRAIREINTGIIVCPTGHLRRWLATLRNDNAQGEYYLTDTVERAATEGIDIVSAQPAALWETLGVNSKVQLAEVERIHQRNLAQRLLETGVTLADPARIDVRGELTCGRDVSIDIGCVFEGRVHLGDGVQIGANCVIRNSSIDAGAQVQPFCHIDSAKIGADGRIGPYARLRPGTELGEDVHIGNFVEVKNSQVAAHSKANHLAYVGDATVGARVNIGAGTITCNYDGANKFRTVIEDDVFIGSDTQLVAPVTVRRGATIGAGTTLTKEAPADKLTLSRAKQMTLDAWQRPVKKAKQ</sequence>
<name>GLMU_CUPPJ</name>
<dbReference type="EC" id="2.7.7.23" evidence="1"/>
<dbReference type="EC" id="2.3.1.157" evidence="1"/>
<dbReference type="EMBL" id="CP000090">
    <property type="protein sequence ID" value="AAZ59611.1"/>
    <property type="molecule type" value="Genomic_DNA"/>
</dbReference>
<dbReference type="SMR" id="Q476S2"/>
<dbReference type="STRING" id="264198.Reut_A0229"/>
<dbReference type="KEGG" id="reu:Reut_A0229"/>
<dbReference type="eggNOG" id="COG1207">
    <property type="taxonomic scope" value="Bacteria"/>
</dbReference>
<dbReference type="HOGENOM" id="CLU_029499_15_2_4"/>
<dbReference type="OrthoDB" id="9775031at2"/>
<dbReference type="UniPathway" id="UPA00113">
    <property type="reaction ID" value="UER00532"/>
</dbReference>
<dbReference type="UniPathway" id="UPA00113">
    <property type="reaction ID" value="UER00533"/>
</dbReference>
<dbReference type="UniPathway" id="UPA00973"/>
<dbReference type="GO" id="GO:0005737">
    <property type="term" value="C:cytoplasm"/>
    <property type="evidence" value="ECO:0007669"/>
    <property type="project" value="UniProtKB-SubCell"/>
</dbReference>
<dbReference type="GO" id="GO:0016020">
    <property type="term" value="C:membrane"/>
    <property type="evidence" value="ECO:0007669"/>
    <property type="project" value="GOC"/>
</dbReference>
<dbReference type="GO" id="GO:0019134">
    <property type="term" value="F:glucosamine-1-phosphate N-acetyltransferase activity"/>
    <property type="evidence" value="ECO:0007669"/>
    <property type="project" value="UniProtKB-UniRule"/>
</dbReference>
<dbReference type="GO" id="GO:0000287">
    <property type="term" value="F:magnesium ion binding"/>
    <property type="evidence" value="ECO:0007669"/>
    <property type="project" value="UniProtKB-UniRule"/>
</dbReference>
<dbReference type="GO" id="GO:0003977">
    <property type="term" value="F:UDP-N-acetylglucosamine diphosphorylase activity"/>
    <property type="evidence" value="ECO:0007669"/>
    <property type="project" value="UniProtKB-UniRule"/>
</dbReference>
<dbReference type="GO" id="GO:0000902">
    <property type="term" value="P:cell morphogenesis"/>
    <property type="evidence" value="ECO:0007669"/>
    <property type="project" value="UniProtKB-UniRule"/>
</dbReference>
<dbReference type="GO" id="GO:0071555">
    <property type="term" value="P:cell wall organization"/>
    <property type="evidence" value="ECO:0007669"/>
    <property type="project" value="UniProtKB-KW"/>
</dbReference>
<dbReference type="GO" id="GO:0009245">
    <property type="term" value="P:lipid A biosynthetic process"/>
    <property type="evidence" value="ECO:0007669"/>
    <property type="project" value="UniProtKB-UniRule"/>
</dbReference>
<dbReference type="GO" id="GO:0009252">
    <property type="term" value="P:peptidoglycan biosynthetic process"/>
    <property type="evidence" value="ECO:0007669"/>
    <property type="project" value="UniProtKB-UniRule"/>
</dbReference>
<dbReference type="GO" id="GO:0008360">
    <property type="term" value="P:regulation of cell shape"/>
    <property type="evidence" value="ECO:0007669"/>
    <property type="project" value="UniProtKB-KW"/>
</dbReference>
<dbReference type="GO" id="GO:0006048">
    <property type="term" value="P:UDP-N-acetylglucosamine biosynthetic process"/>
    <property type="evidence" value="ECO:0007669"/>
    <property type="project" value="UniProtKB-UniPathway"/>
</dbReference>
<dbReference type="CDD" id="cd02540">
    <property type="entry name" value="GT2_GlmU_N_bac"/>
    <property type="match status" value="1"/>
</dbReference>
<dbReference type="CDD" id="cd03353">
    <property type="entry name" value="LbH_GlmU_C"/>
    <property type="match status" value="1"/>
</dbReference>
<dbReference type="Gene3D" id="2.160.10.10">
    <property type="entry name" value="Hexapeptide repeat proteins"/>
    <property type="match status" value="1"/>
</dbReference>
<dbReference type="Gene3D" id="3.90.550.10">
    <property type="entry name" value="Spore Coat Polysaccharide Biosynthesis Protein SpsA, Chain A"/>
    <property type="match status" value="1"/>
</dbReference>
<dbReference type="HAMAP" id="MF_01631">
    <property type="entry name" value="GlmU"/>
    <property type="match status" value="1"/>
</dbReference>
<dbReference type="InterPro" id="IPR005882">
    <property type="entry name" value="Bifunctional_GlmU"/>
</dbReference>
<dbReference type="InterPro" id="IPR050065">
    <property type="entry name" value="GlmU-like"/>
</dbReference>
<dbReference type="InterPro" id="IPR038009">
    <property type="entry name" value="GlmU_C_LbH"/>
</dbReference>
<dbReference type="InterPro" id="IPR001451">
    <property type="entry name" value="Hexapep"/>
</dbReference>
<dbReference type="InterPro" id="IPR025877">
    <property type="entry name" value="MobA-like_NTP_Trfase"/>
</dbReference>
<dbReference type="InterPro" id="IPR029044">
    <property type="entry name" value="Nucleotide-diphossugar_trans"/>
</dbReference>
<dbReference type="InterPro" id="IPR011004">
    <property type="entry name" value="Trimer_LpxA-like_sf"/>
</dbReference>
<dbReference type="NCBIfam" id="TIGR01173">
    <property type="entry name" value="glmU"/>
    <property type="match status" value="1"/>
</dbReference>
<dbReference type="PANTHER" id="PTHR43584:SF3">
    <property type="entry name" value="BIFUNCTIONAL PROTEIN GLMU"/>
    <property type="match status" value="1"/>
</dbReference>
<dbReference type="PANTHER" id="PTHR43584">
    <property type="entry name" value="NUCLEOTIDYL TRANSFERASE"/>
    <property type="match status" value="1"/>
</dbReference>
<dbReference type="Pfam" id="PF00132">
    <property type="entry name" value="Hexapep"/>
    <property type="match status" value="2"/>
</dbReference>
<dbReference type="Pfam" id="PF12804">
    <property type="entry name" value="NTP_transf_3"/>
    <property type="match status" value="1"/>
</dbReference>
<dbReference type="SUPFAM" id="SSF53448">
    <property type="entry name" value="Nucleotide-diphospho-sugar transferases"/>
    <property type="match status" value="1"/>
</dbReference>
<dbReference type="SUPFAM" id="SSF51161">
    <property type="entry name" value="Trimeric LpxA-like enzymes"/>
    <property type="match status" value="1"/>
</dbReference>
<proteinExistence type="inferred from homology"/>
<evidence type="ECO:0000255" key="1">
    <source>
        <dbReference type="HAMAP-Rule" id="MF_01631"/>
    </source>
</evidence>
<comment type="function">
    <text evidence="1">Catalyzes the last two sequential reactions in the de novo biosynthetic pathway for UDP-N-acetylglucosamine (UDP-GlcNAc). The C-terminal domain catalyzes the transfer of acetyl group from acetyl coenzyme A to glucosamine-1-phosphate (GlcN-1-P) to produce N-acetylglucosamine-1-phosphate (GlcNAc-1-P), which is converted into UDP-GlcNAc by the transfer of uridine 5-monophosphate (from uridine 5-triphosphate), a reaction catalyzed by the N-terminal domain.</text>
</comment>
<comment type="catalytic activity">
    <reaction evidence="1">
        <text>alpha-D-glucosamine 1-phosphate + acetyl-CoA = N-acetyl-alpha-D-glucosamine 1-phosphate + CoA + H(+)</text>
        <dbReference type="Rhea" id="RHEA:13725"/>
        <dbReference type="ChEBI" id="CHEBI:15378"/>
        <dbReference type="ChEBI" id="CHEBI:57287"/>
        <dbReference type="ChEBI" id="CHEBI:57288"/>
        <dbReference type="ChEBI" id="CHEBI:57776"/>
        <dbReference type="ChEBI" id="CHEBI:58516"/>
        <dbReference type="EC" id="2.3.1.157"/>
    </reaction>
</comment>
<comment type="catalytic activity">
    <reaction evidence="1">
        <text>N-acetyl-alpha-D-glucosamine 1-phosphate + UTP + H(+) = UDP-N-acetyl-alpha-D-glucosamine + diphosphate</text>
        <dbReference type="Rhea" id="RHEA:13509"/>
        <dbReference type="ChEBI" id="CHEBI:15378"/>
        <dbReference type="ChEBI" id="CHEBI:33019"/>
        <dbReference type="ChEBI" id="CHEBI:46398"/>
        <dbReference type="ChEBI" id="CHEBI:57705"/>
        <dbReference type="ChEBI" id="CHEBI:57776"/>
        <dbReference type="EC" id="2.7.7.23"/>
    </reaction>
</comment>
<comment type="cofactor">
    <cofactor evidence="1">
        <name>Mg(2+)</name>
        <dbReference type="ChEBI" id="CHEBI:18420"/>
    </cofactor>
    <text evidence="1">Binds 1 Mg(2+) ion per subunit.</text>
</comment>
<comment type="pathway">
    <text evidence="1">Nucleotide-sugar biosynthesis; UDP-N-acetyl-alpha-D-glucosamine biosynthesis; N-acetyl-alpha-D-glucosamine 1-phosphate from alpha-D-glucosamine 6-phosphate (route II): step 2/2.</text>
</comment>
<comment type="pathway">
    <text evidence="1">Nucleotide-sugar biosynthesis; UDP-N-acetyl-alpha-D-glucosamine biosynthesis; UDP-N-acetyl-alpha-D-glucosamine from N-acetyl-alpha-D-glucosamine 1-phosphate: step 1/1.</text>
</comment>
<comment type="pathway">
    <text evidence="1">Bacterial outer membrane biogenesis; LPS lipid A biosynthesis.</text>
</comment>
<comment type="subunit">
    <text evidence="1">Homotrimer.</text>
</comment>
<comment type="subcellular location">
    <subcellularLocation>
        <location evidence="1">Cytoplasm</location>
    </subcellularLocation>
</comment>
<comment type="similarity">
    <text evidence="1">In the N-terminal section; belongs to the N-acetylglucosamine-1-phosphate uridyltransferase family.</text>
</comment>
<comment type="similarity">
    <text evidence="1">In the C-terminal section; belongs to the transferase hexapeptide repeat family.</text>
</comment>
<reference key="1">
    <citation type="journal article" date="2010" name="PLoS ONE">
        <title>The complete multipartite genome sequence of Cupriavidus necator JMP134, a versatile pollutant degrader.</title>
        <authorList>
            <person name="Lykidis A."/>
            <person name="Perez-Pantoja D."/>
            <person name="Ledger T."/>
            <person name="Mavromatis K."/>
            <person name="Anderson I.J."/>
            <person name="Ivanova N.N."/>
            <person name="Hooper S.D."/>
            <person name="Lapidus A."/>
            <person name="Lucas S."/>
            <person name="Gonzalez B."/>
            <person name="Kyrpides N.C."/>
        </authorList>
    </citation>
    <scope>NUCLEOTIDE SEQUENCE [LARGE SCALE GENOMIC DNA]</scope>
    <source>
        <strain>JMP134 / LMG 1197</strain>
    </source>
</reference>
<organism>
    <name type="scientific">Cupriavidus pinatubonensis (strain JMP 134 / LMG 1197)</name>
    <name type="common">Cupriavidus necator (strain JMP 134)</name>
    <dbReference type="NCBI Taxonomy" id="264198"/>
    <lineage>
        <taxon>Bacteria</taxon>
        <taxon>Pseudomonadati</taxon>
        <taxon>Pseudomonadota</taxon>
        <taxon>Betaproteobacteria</taxon>
        <taxon>Burkholderiales</taxon>
        <taxon>Burkholderiaceae</taxon>
        <taxon>Cupriavidus</taxon>
    </lineage>
</organism>
<keyword id="KW-0012">Acyltransferase</keyword>
<keyword id="KW-0133">Cell shape</keyword>
<keyword id="KW-0961">Cell wall biogenesis/degradation</keyword>
<keyword id="KW-0963">Cytoplasm</keyword>
<keyword id="KW-0460">Magnesium</keyword>
<keyword id="KW-0479">Metal-binding</keyword>
<keyword id="KW-0511">Multifunctional enzyme</keyword>
<keyword id="KW-0548">Nucleotidyltransferase</keyword>
<keyword id="KW-0573">Peptidoglycan synthesis</keyword>
<keyword id="KW-0677">Repeat</keyword>
<keyword id="KW-0808">Transferase</keyword>
<feature type="chain" id="PRO_0000233829" description="Bifunctional protein GlmU">
    <location>
        <begin position="1"/>
        <end position="454"/>
    </location>
</feature>
<feature type="region of interest" description="Pyrophosphorylase" evidence="1">
    <location>
        <begin position="1"/>
        <end position="225"/>
    </location>
</feature>
<feature type="region of interest" description="Linker" evidence="1">
    <location>
        <begin position="226"/>
        <end position="246"/>
    </location>
</feature>
<feature type="region of interest" description="N-acetyltransferase" evidence="1">
    <location>
        <begin position="247"/>
        <end position="454"/>
    </location>
</feature>
<feature type="active site" description="Proton acceptor" evidence="1">
    <location>
        <position position="359"/>
    </location>
</feature>
<feature type="binding site" evidence="1">
    <location>
        <begin position="6"/>
        <end position="9"/>
    </location>
    <ligand>
        <name>UDP-N-acetyl-alpha-D-glucosamine</name>
        <dbReference type="ChEBI" id="CHEBI:57705"/>
    </ligand>
</feature>
<feature type="binding site" evidence="1">
    <location>
        <position position="20"/>
    </location>
    <ligand>
        <name>UDP-N-acetyl-alpha-D-glucosamine</name>
        <dbReference type="ChEBI" id="CHEBI:57705"/>
    </ligand>
</feature>
<feature type="binding site" evidence="1">
    <location>
        <position position="71"/>
    </location>
    <ligand>
        <name>UDP-N-acetyl-alpha-D-glucosamine</name>
        <dbReference type="ChEBI" id="CHEBI:57705"/>
    </ligand>
</feature>
<feature type="binding site" evidence="1">
    <location>
        <begin position="76"/>
        <end position="77"/>
    </location>
    <ligand>
        <name>UDP-N-acetyl-alpha-D-glucosamine</name>
        <dbReference type="ChEBI" id="CHEBI:57705"/>
    </ligand>
</feature>
<feature type="binding site" evidence="1">
    <location>
        <begin position="98"/>
        <end position="100"/>
    </location>
    <ligand>
        <name>UDP-N-acetyl-alpha-D-glucosamine</name>
        <dbReference type="ChEBI" id="CHEBI:57705"/>
    </ligand>
</feature>
<feature type="binding site" evidence="1">
    <location>
        <position position="100"/>
    </location>
    <ligand>
        <name>Mg(2+)</name>
        <dbReference type="ChEBI" id="CHEBI:18420"/>
    </ligand>
</feature>
<feature type="binding site" evidence="1">
    <location>
        <position position="135"/>
    </location>
    <ligand>
        <name>UDP-N-acetyl-alpha-D-glucosamine</name>
        <dbReference type="ChEBI" id="CHEBI:57705"/>
    </ligand>
</feature>
<feature type="binding site" evidence="1">
    <location>
        <position position="150"/>
    </location>
    <ligand>
        <name>UDP-N-acetyl-alpha-D-glucosamine</name>
        <dbReference type="ChEBI" id="CHEBI:57705"/>
    </ligand>
</feature>
<feature type="binding site" evidence="1">
    <location>
        <position position="165"/>
    </location>
    <ligand>
        <name>UDP-N-acetyl-alpha-D-glucosamine</name>
        <dbReference type="ChEBI" id="CHEBI:57705"/>
    </ligand>
</feature>
<feature type="binding site" evidence="1">
    <location>
        <position position="223"/>
    </location>
    <ligand>
        <name>Mg(2+)</name>
        <dbReference type="ChEBI" id="CHEBI:18420"/>
    </ligand>
</feature>
<feature type="binding site" evidence="1">
    <location>
        <position position="223"/>
    </location>
    <ligand>
        <name>UDP-N-acetyl-alpha-D-glucosamine</name>
        <dbReference type="ChEBI" id="CHEBI:57705"/>
    </ligand>
</feature>
<feature type="binding site" evidence="1">
    <location>
        <position position="329"/>
    </location>
    <ligand>
        <name>UDP-N-acetyl-alpha-D-glucosamine</name>
        <dbReference type="ChEBI" id="CHEBI:57705"/>
    </ligand>
</feature>
<feature type="binding site" evidence="1">
    <location>
        <position position="347"/>
    </location>
    <ligand>
        <name>UDP-N-acetyl-alpha-D-glucosamine</name>
        <dbReference type="ChEBI" id="CHEBI:57705"/>
    </ligand>
</feature>
<feature type="binding site" evidence="1">
    <location>
        <position position="362"/>
    </location>
    <ligand>
        <name>UDP-N-acetyl-alpha-D-glucosamine</name>
        <dbReference type="ChEBI" id="CHEBI:57705"/>
    </ligand>
</feature>
<feature type="binding site" evidence="1">
    <location>
        <position position="373"/>
    </location>
    <ligand>
        <name>UDP-N-acetyl-alpha-D-glucosamine</name>
        <dbReference type="ChEBI" id="CHEBI:57705"/>
    </ligand>
</feature>
<feature type="binding site" evidence="1">
    <location>
        <position position="376"/>
    </location>
    <ligand>
        <name>acetyl-CoA</name>
        <dbReference type="ChEBI" id="CHEBI:57288"/>
    </ligand>
</feature>
<feature type="binding site" evidence="1">
    <location>
        <begin position="382"/>
        <end position="383"/>
    </location>
    <ligand>
        <name>acetyl-CoA</name>
        <dbReference type="ChEBI" id="CHEBI:57288"/>
    </ligand>
</feature>
<feature type="binding site" evidence="1">
    <location>
        <position position="401"/>
    </location>
    <ligand>
        <name>acetyl-CoA</name>
        <dbReference type="ChEBI" id="CHEBI:57288"/>
    </ligand>
</feature>
<feature type="binding site" evidence="1">
    <location>
        <position position="419"/>
    </location>
    <ligand>
        <name>acetyl-CoA</name>
        <dbReference type="ChEBI" id="CHEBI:57288"/>
    </ligand>
</feature>
<feature type="binding site" evidence="1">
    <location>
        <position position="436"/>
    </location>
    <ligand>
        <name>acetyl-CoA</name>
        <dbReference type="ChEBI" id="CHEBI:57288"/>
    </ligand>
</feature>
<protein>
    <recommendedName>
        <fullName evidence="1">Bifunctional protein GlmU</fullName>
    </recommendedName>
    <domain>
        <recommendedName>
            <fullName evidence="1">UDP-N-acetylglucosamine pyrophosphorylase</fullName>
            <ecNumber evidence="1">2.7.7.23</ecNumber>
        </recommendedName>
        <alternativeName>
            <fullName evidence="1">N-acetylglucosamine-1-phosphate uridyltransferase</fullName>
        </alternativeName>
    </domain>
    <domain>
        <recommendedName>
            <fullName evidence="1">Glucosamine-1-phosphate N-acetyltransferase</fullName>
            <ecNumber evidence="1">2.3.1.157</ecNumber>
        </recommendedName>
    </domain>
</protein>
<accession>Q476S2</accession>